<evidence type="ECO:0000250" key="1">
    <source>
        <dbReference type="UniProtKB" id="Q9CZ62"/>
    </source>
</evidence>
<evidence type="ECO:0000255" key="2">
    <source>
        <dbReference type="PROSITE-ProRule" id="PRU00116"/>
    </source>
</evidence>
<evidence type="ECO:0000256" key="3">
    <source>
        <dbReference type="SAM" id="MobiDB-lite"/>
    </source>
</evidence>
<evidence type="ECO:0000269" key="4">
    <source>
    </source>
</evidence>
<evidence type="ECO:0000269" key="5">
    <source>
    </source>
</evidence>
<evidence type="ECO:0000269" key="6">
    <source>
    </source>
</evidence>
<evidence type="ECO:0000269" key="7">
    <source>
    </source>
</evidence>
<evidence type="ECO:0000269" key="8">
    <source>
    </source>
</evidence>
<evidence type="ECO:0000269" key="9">
    <source>
    </source>
</evidence>
<evidence type="ECO:0000269" key="10">
    <source>
    </source>
</evidence>
<evidence type="ECO:0000303" key="11">
    <source>
    </source>
</evidence>
<evidence type="ECO:0000305" key="12"/>
<evidence type="ECO:0007744" key="13">
    <source>
    </source>
</evidence>
<evidence type="ECO:0007744" key="14">
    <source>
    </source>
</evidence>
<evidence type="ECO:0007744" key="15">
    <source>
    </source>
</evidence>
<evidence type="ECO:0007744" key="16">
    <source>
    </source>
</evidence>
<evidence type="ECO:0007744" key="17">
    <source>
    </source>
</evidence>
<name>CEP97_HUMAN</name>
<accession>Q8IW35</accession>
<accession>B5MDY8</accession>
<accession>Q8NA71</accession>
<accession>Q9H5T9</accession>
<proteinExistence type="evidence at protein level"/>
<feature type="chain" id="PRO_0000263705" description="Centrosomal protein of 97 kDa">
    <location>
        <begin position="1"/>
        <end position="865"/>
    </location>
</feature>
<feature type="repeat" description="LRR 1">
    <location>
        <begin position="37"/>
        <end position="58"/>
    </location>
</feature>
<feature type="repeat" description="LRR 2">
    <location>
        <begin position="59"/>
        <end position="80"/>
    </location>
</feature>
<feature type="repeat" description="LRR 3">
    <location>
        <begin position="81"/>
        <end position="102"/>
    </location>
</feature>
<feature type="repeat" description="LRR 4">
    <location>
        <begin position="103"/>
        <end position="124"/>
    </location>
</feature>
<feature type="repeat" description="LRR 5">
    <location>
        <begin position="125"/>
        <end position="146"/>
    </location>
</feature>
<feature type="repeat" description="LRR 6">
    <location>
        <begin position="147"/>
        <end position="168"/>
    </location>
</feature>
<feature type="repeat" description="LRR 7">
    <location>
        <begin position="171"/>
        <end position="192"/>
    </location>
</feature>
<feature type="repeat" description="LRR 8">
    <location>
        <begin position="196"/>
        <end position="205"/>
    </location>
</feature>
<feature type="domain" description="LRRCT">
    <location>
        <begin position="211"/>
        <end position="249"/>
    </location>
</feature>
<feature type="domain" description="IQ" evidence="2">
    <location>
        <begin position="558"/>
        <end position="587"/>
    </location>
</feature>
<feature type="region of interest" description="CCP110-binding">
    <location>
        <begin position="300"/>
        <end position="750"/>
    </location>
</feature>
<feature type="region of interest" description="Disordered" evidence="3">
    <location>
        <begin position="506"/>
        <end position="529"/>
    </location>
</feature>
<feature type="region of interest" description="Interaction with MPHOSPH9" evidence="10">
    <location>
        <begin position="587"/>
        <end position="865"/>
    </location>
</feature>
<feature type="region of interest" description="Disordered" evidence="3">
    <location>
        <begin position="715"/>
        <end position="769"/>
    </location>
</feature>
<feature type="compositionally biased region" description="Basic and acidic residues" evidence="3">
    <location>
        <begin position="508"/>
        <end position="527"/>
    </location>
</feature>
<feature type="compositionally biased region" description="Polar residues" evidence="3">
    <location>
        <begin position="725"/>
        <end position="738"/>
    </location>
</feature>
<feature type="compositionally biased region" description="Basic and acidic residues" evidence="3">
    <location>
        <begin position="741"/>
        <end position="760"/>
    </location>
</feature>
<feature type="modified residue" description="Phosphoserine" evidence="15 17">
    <location>
        <position position="308"/>
    </location>
</feature>
<feature type="modified residue" description="Phosphoserine" evidence="16">
    <location>
        <position position="413"/>
    </location>
</feature>
<feature type="modified residue" description="Phosphoserine" evidence="17">
    <location>
        <position position="500"/>
    </location>
</feature>
<feature type="modified residue" description="Phosphoserine" evidence="1">
    <location>
        <position position="530"/>
    </location>
</feature>
<feature type="modified residue" description="Phosphothreonine" evidence="13">
    <location>
        <position position="542"/>
    </location>
</feature>
<feature type="modified residue" description="Phosphoserine" evidence="14">
    <location>
        <position position="763"/>
    </location>
</feature>
<feature type="splice variant" id="VSP_031155" description="In isoform 2." evidence="11">
    <original>Q</original>
    <variation>QKWGLAILPRPVSNFWAQAVFPPQPPK</variation>
    <location>
        <position position="631"/>
    </location>
</feature>
<feature type="sequence conflict" description="In Ref. 3; BAC04055." evidence="12" ref="3">
    <location>
        <begin position="299"/>
        <end position="300"/>
    </location>
</feature>
<feature type="sequence conflict" description="In Ref. 3; BAC04055." evidence="12" ref="3">
    <original>L</original>
    <variation>F</variation>
    <location>
        <position position="399"/>
    </location>
</feature>
<feature type="sequence conflict" description="In Ref. 3; BAB15531." evidence="12" ref="3">
    <location>
        <position position="758"/>
    </location>
</feature>
<reference key="1">
    <citation type="journal article" date="2006" name="Nature">
        <title>The DNA sequence, annotation and analysis of human chromosome 3.</title>
        <authorList>
            <person name="Muzny D.M."/>
            <person name="Scherer S.E."/>
            <person name="Kaul R."/>
            <person name="Wang J."/>
            <person name="Yu J."/>
            <person name="Sudbrak R."/>
            <person name="Buhay C.J."/>
            <person name="Chen R."/>
            <person name="Cree A."/>
            <person name="Ding Y."/>
            <person name="Dugan-Rocha S."/>
            <person name="Gill R."/>
            <person name="Gunaratne P."/>
            <person name="Harris R.A."/>
            <person name="Hawes A.C."/>
            <person name="Hernandez J."/>
            <person name="Hodgson A.V."/>
            <person name="Hume J."/>
            <person name="Jackson A."/>
            <person name="Khan Z.M."/>
            <person name="Kovar-Smith C."/>
            <person name="Lewis L.R."/>
            <person name="Lozado R.J."/>
            <person name="Metzker M.L."/>
            <person name="Milosavljevic A."/>
            <person name="Miner G.R."/>
            <person name="Morgan M.B."/>
            <person name="Nazareth L.V."/>
            <person name="Scott G."/>
            <person name="Sodergren E."/>
            <person name="Song X.-Z."/>
            <person name="Steffen D."/>
            <person name="Wei S."/>
            <person name="Wheeler D.A."/>
            <person name="Wright M.W."/>
            <person name="Worley K.C."/>
            <person name="Yuan Y."/>
            <person name="Zhang Z."/>
            <person name="Adams C.Q."/>
            <person name="Ansari-Lari M.A."/>
            <person name="Ayele M."/>
            <person name="Brown M.J."/>
            <person name="Chen G."/>
            <person name="Chen Z."/>
            <person name="Clendenning J."/>
            <person name="Clerc-Blankenburg K.P."/>
            <person name="Chen R."/>
            <person name="Chen Z."/>
            <person name="Davis C."/>
            <person name="Delgado O."/>
            <person name="Dinh H.H."/>
            <person name="Dong W."/>
            <person name="Draper H."/>
            <person name="Ernst S."/>
            <person name="Fu G."/>
            <person name="Gonzalez-Garay M.L."/>
            <person name="Garcia D.K."/>
            <person name="Gillett W."/>
            <person name="Gu J."/>
            <person name="Hao B."/>
            <person name="Haugen E."/>
            <person name="Havlak P."/>
            <person name="He X."/>
            <person name="Hennig S."/>
            <person name="Hu S."/>
            <person name="Huang W."/>
            <person name="Jackson L.R."/>
            <person name="Jacob L.S."/>
            <person name="Kelly S.H."/>
            <person name="Kube M."/>
            <person name="Levy R."/>
            <person name="Li Z."/>
            <person name="Liu B."/>
            <person name="Liu J."/>
            <person name="Liu W."/>
            <person name="Lu J."/>
            <person name="Maheshwari M."/>
            <person name="Nguyen B.-V."/>
            <person name="Okwuonu G.O."/>
            <person name="Palmeiri A."/>
            <person name="Pasternak S."/>
            <person name="Perez L.M."/>
            <person name="Phelps K.A."/>
            <person name="Plopper F.J."/>
            <person name="Qiang B."/>
            <person name="Raymond C."/>
            <person name="Rodriguez R."/>
            <person name="Saenphimmachak C."/>
            <person name="Santibanez J."/>
            <person name="Shen H."/>
            <person name="Shen Y."/>
            <person name="Subramanian S."/>
            <person name="Tabor P.E."/>
            <person name="Verduzco D."/>
            <person name="Waldron L."/>
            <person name="Wang J."/>
            <person name="Wang J."/>
            <person name="Wang Q."/>
            <person name="Williams G.A."/>
            <person name="Wong G.K.-S."/>
            <person name="Yao Z."/>
            <person name="Zhang J."/>
            <person name="Zhang X."/>
            <person name="Zhao G."/>
            <person name="Zhou J."/>
            <person name="Zhou Y."/>
            <person name="Nelson D."/>
            <person name="Lehrach H."/>
            <person name="Reinhardt R."/>
            <person name="Naylor S.L."/>
            <person name="Yang H."/>
            <person name="Olson M."/>
            <person name="Weinstock G."/>
            <person name="Gibbs R.A."/>
        </authorList>
    </citation>
    <scope>NUCLEOTIDE SEQUENCE [LARGE SCALE GENOMIC DNA]</scope>
</reference>
<reference key="2">
    <citation type="journal article" date="2004" name="Genome Res.">
        <title>The status, quality, and expansion of the NIH full-length cDNA project: the Mammalian Gene Collection (MGC).</title>
        <authorList>
            <consortium name="The MGC Project Team"/>
        </authorList>
    </citation>
    <scope>NUCLEOTIDE SEQUENCE [LARGE SCALE MRNA] (ISOFORM 1)</scope>
    <source>
        <tissue>Skin</tissue>
    </source>
</reference>
<reference key="3">
    <citation type="journal article" date="2004" name="Nat. Genet.">
        <title>Complete sequencing and characterization of 21,243 full-length human cDNAs.</title>
        <authorList>
            <person name="Ota T."/>
            <person name="Suzuki Y."/>
            <person name="Nishikawa T."/>
            <person name="Otsuki T."/>
            <person name="Sugiyama T."/>
            <person name="Irie R."/>
            <person name="Wakamatsu A."/>
            <person name="Hayashi K."/>
            <person name="Sato H."/>
            <person name="Nagai K."/>
            <person name="Kimura K."/>
            <person name="Makita H."/>
            <person name="Sekine M."/>
            <person name="Obayashi M."/>
            <person name="Nishi T."/>
            <person name="Shibahara T."/>
            <person name="Tanaka T."/>
            <person name="Ishii S."/>
            <person name="Yamamoto J."/>
            <person name="Saito K."/>
            <person name="Kawai Y."/>
            <person name="Isono Y."/>
            <person name="Nakamura Y."/>
            <person name="Nagahari K."/>
            <person name="Murakami K."/>
            <person name="Yasuda T."/>
            <person name="Iwayanagi T."/>
            <person name="Wagatsuma M."/>
            <person name="Shiratori A."/>
            <person name="Sudo H."/>
            <person name="Hosoiri T."/>
            <person name="Kaku Y."/>
            <person name="Kodaira H."/>
            <person name="Kondo H."/>
            <person name="Sugawara M."/>
            <person name="Takahashi M."/>
            <person name="Kanda K."/>
            <person name="Yokoi T."/>
            <person name="Furuya T."/>
            <person name="Kikkawa E."/>
            <person name="Omura Y."/>
            <person name="Abe K."/>
            <person name="Kamihara K."/>
            <person name="Katsuta N."/>
            <person name="Sato K."/>
            <person name="Tanikawa M."/>
            <person name="Yamazaki M."/>
            <person name="Ninomiya K."/>
            <person name="Ishibashi T."/>
            <person name="Yamashita H."/>
            <person name="Murakawa K."/>
            <person name="Fujimori K."/>
            <person name="Tanai H."/>
            <person name="Kimata M."/>
            <person name="Watanabe M."/>
            <person name="Hiraoka S."/>
            <person name="Chiba Y."/>
            <person name="Ishida S."/>
            <person name="Ono Y."/>
            <person name="Takiguchi S."/>
            <person name="Watanabe S."/>
            <person name="Yosida M."/>
            <person name="Hotuta T."/>
            <person name="Kusano J."/>
            <person name="Kanehori K."/>
            <person name="Takahashi-Fujii A."/>
            <person name="Hara H."/>
            <person name="Tanase T.-O."/>
            <person name="Nomura Y."/>
            <person name="Togiya S."/>
            <person name="Komai F."/>
            <person name="Hara R."/>
            <person name="Takeuchi K."/>
            <person name="Arita M."/>
            <person name="Imose N."/>
            <person name="Musashino K."/>
            <person name="Yuuki H."/>
            <person name="Oshima A."/>
            <person name="Sasaki N."/>
            <person name="Aotsuka S."/>
            <person name="Yoshikawa Y."/>
            <person name="Matsunawa H."/>
            <person name="Ichihara T."/>
            <person name="Shiohata N."/>
            <person name="Sano S."/>
            <person name="Moriya S."/>
            <person name="Momiyama H."/>
            <person name="Satoh N."/>
            <person name="Takami S."/>
            <person name="Terashima Y."/>
            <person name="Suzuki O."/>
            <person name="Nakagawa S."/>
            <person name="Senoh A."/>
            <person name="Mizoguchi H."/>
            <person name="Goto Y."/>
            <person name="Shimizu F."/>
            <person name="Wakebe H."/>
            <person name="Hishigaki H."/>
            <person name="Watanabe T."/>
            <person name="Sugiyama A."/>
            <person name="Takemoto M."/>
            <person name="Kawakami B."/>
            <person name="Yamazaki M."/>
            <person name="Watanabe K."/>
            <person name="Kumagai A."/>
            <person name="Itakura S."/>
            <person name="Fukuzumi Y."/>
            <person name="Fujimori Y."/>
            <person name="Komiyama M."/>
            <person name="Tashiro H."/>
            <person name="Tanigami A."/>
            <person name="Fujiwara T."/>
            <person name="Ono T."/>
            <person name="Yamada K."/>
            <person name="Fujii Y."/>
            <person name="Ozaki K."/>
            <person name="Hirao M."/>
            <person name="Ohmori Y."/>
            <person name="Kawabata A."/>
            <person name="Hikiji T."/>
            <person name="Kobatake N."/>
            <person name="Inagaki H."/>
            <person name="Ikema Y."/>
            <person name="Okamoto S."/>
            <person name="Okitani R."/>
            <person name="Kawakami T."/>
            <person name="Noguchi S."/>
            <person name="Itoh T."/>
            <person name="Shigeta K."/>
            <person name="Senba T."/>
            <person name="Matsumura K."/>
            <person name="Nakajima Y."/>
            <person name="Mizuno T."/>
            <person name="Morinaga M."/>
            <person name="Sasaki M."/>
            <person name="Togashi T."/>
            <person name="Oyama M."/>
            <person name="Hata H."/>
            <person name="Watanabe M."/>
            <person name="Komatsu T."/>
            <person name="Mizushima-Sugano J."/>
            <person name="Satoh T."/>
            <person name="Shirai Y."/>
            <person name="Takahashi Y."/>
            <person name="Nakagawa K."/>
            <person name="Okumura K."/>
            <person name="Nagase T."/>
            <person name="Nomura N."/>
            <person name="Kikuchi H."/>
            <person name="Masuho Y."/>
            <person name="Yamashita R."/>
            <person name="Nakai K."/>
            <person name="Yada T."/>
            <person name="Nakamura Y."/>
            <person name="Ohara O."/>
            <person name="Isogai T."/>
            <person name="Sugano S."/>
        </authorList>
    </citation>
    <scope>NUCLEOTIDE SEQUENCE [LARGE SCALE MRNA] OF 161-696 (ISOFORM 2)</scope>
    <scope>NUCLEOTIDE SEQUENCE [LARGE SCALE MRNA] OF 714-865 (ISOFORM 1)</scope>
    <source>
        <tissue>Lung</tissue>
        <tissue>Testis</tissue>
    </source>
</reference>
<reference key="4">
    <citation type="journal article" date="2003" name="Nature">
        <title>Proteomic characterization of the human centrosome by protein correlation profiling.</title>
        <authorList>
            <person name="Andersen J.S."/>
            <person name="Wilkinson C.J."/>
            <person name="Mayor T."/>
            <person name="Mortensen P."/>
            <person name="Nigg E.A."/>
            <person name="Mann M."/>
        </authorList>
    </citation>
    <scope>IDENTIFICATION BY MASS SPECTROMETRY</scope>
    <scope>SUBCELLULAR LOCATION [LARGE SCALE ANALYSIS]</scope>
    <source>
        <tissue>Lymphoblast</tissue>
    </source>
</reference>
<reference key="5">
    <citation type="journal article" date="2007" name="Cell">
        <title>Cep97 and CP110 suppress a cilia assembly program.</title>
        <authorList>
            <person name="Spektor A."/>
            <person name="Tsang W.Y."/>
            <person name="Khoo D."/>
            <person name="Dynlacht B.D."/>
        </authorList>
    </citation>
    <scope>IDENTIFICATION BY MASS SPECTROMETRY</scope>
    <scope>FUNCTION</scope>
    <scope>INTERACTION WITH CALM1 AND CCP110</scope>
    <scope>SUBCELLULAR LOCATION</scope>
</reference>
<reference key="6">
    <citation type="journal article" date="2007" name="Science">
        <title>ATM and ATR substrate analysis reveals extensive protein networks responsive to DNA damage.</title>
        <authorList>
            <person name="Matsuoka S."/>
            <person name="Ballif B.A."/>
            <person name="Smogorzewska A."/>
            <person name="McDonald E.R. III"/>
            <person name="Hurov K.E."/>
            <person name="Luo J."/>
            <person name="Bakalarski C.E."/>
            <person name="Zhao Z."/>
            <person name="Solimini N."/>
            <person name="Lerenthal Y."/>
            <person name="Shiloh Y."/>
            <person name="Gygi S.P."/>
            <person name="Elledge S.J."/>
        </authorList>
    </citation>
    <scope>PHOSPHORYLATION [LARGE SCALE ANALYSIS] AT THR-542</scope>
    <scope>IDENTIFICATION BY MASS SPECTROMETRY [LARGE SCALE ANALYSIS]</scope>
    <source>
        <tissue>Embryonic kidney</tissue>
    </source>
</reference>
<reference key="7">
    <citation type="journal article" date="2008" name="Proc. Natl. Acad. Sci. U.S.A.">
        <title>A quantitative atlas of mitotic phosphorylation.</title>
        <authorList>
            <person name="Dephoure N."/>
            <person name="Zhou C."/>
            <person name="Villen J."/>
            <person name="Beausoleil S.A."/>
            <person name="Bakalarski C.E."/>
            <person name="Elledge S.J."/>
            <person name="Gygi S.P."/>
        </authorList>
    </citation>
    <scope>PHOSPHORYLATION [LARGE SCALE ANALYSIS] AT SER-763</scope>
    <scope>IDENTIFICATION BY MASS SPECTROMETRY [LARGE SCALE ANALYSIS]</scope>
    <source>
        <tissue>Cervix carcinoma</tissue>
    </source>
</reference>
<reference key="8">
    <citation type="journal article" date="2009" name="Dev. Cell">
        <title>Cep76, a centrosomal protein that specifically restrains centriole reduplication.</title>
        <authorList>
            <person name="Tsang W.Y."/>
            <person name="Spektor A."/>
            <person name="Vijayakumar S."/>
            <person name="Bista B.R."/>
            <person name="Li J."/>
            <person name="Sanchez I."/>
            <person name="Duensing S."/>
            <person name="Dynlacht B.D."/>
        </authorList>
    </citation>
    <scope>INTERACTION WITH CEP76</scope>
</reference>
<reference key="9">
    <citation type="journal article" date="2009" name="Mol. Cell. Proteomics">
        <title>Large-scale proteomics analysis of the human kinome.</title>
        <authorList>
            <person name="Oppermann F.S."/>
            <person name="Gnad F."/>
            <person name="Olsen J.V."/>
            <person name="Hornberger R."/>
            <person name="Greff Z."/>
            <person name="Keri G."/>
            <person name="Mann M."/>
            <person name="Daub H."/>
        </authorList>
    </citation>
    <scope>PHOSPHORYLATION [LARGE SCALE ANALYSIS] AT SER-308</scope>
    <scope>IDENTIFICATION BY MASS SPECTROMETRY [LARGE SCALE ANALYSIS]</scope>
</reference>
<reference key="10">
    <citation type="journal article" date="2010" name="Sci. Signal.">
        <title>Quantitative phosphoproteomics reveals widespread full phosphorylation site occupancy during mitosis.</title>
        <authorList>
            <person name="Olsen J.V."/>
            <person name="Vermeulen M."/>
            <person name="Santamaria A."/>
            <person name="Kumar C."/>
            <person name="Miller M.L."/>
            <person name="Jensen L.J."/>
            <person name="Gnad F."/>
            <person name="Cox J."/>
            <person name="Jensen T.S."/>
            <person name="Nigg E.A."/>
            <person name="Brunak S."/>
            <person name="Mann M."/>
        </authorList>
    </citation>
    <scope>PHOSPHORYLATION [LARGE SCALE ANALYSIS] AT SER-413</scope>
    <scope>IDENTIFICATION BY MASS SPECTROMETRY [LARGE SCALE ANALYSIS]</scope>
    <source>
        <tissue>Cervix carcinoma</tissue>
    </source>
</reference>
<reference key="11">
    <citation type="journal article" date="2011" name="BMC Syst. Biol.">
        <title>Initial characterization of the human central proteome.</title>
        <authorList>
            <person name="Burkard T.R."/>
            <person name="Planyavsky M."/>
            <person name="Kaupe I."/>
            <person name="Breitwieser F.P."/>
            <person name="Buerckstuemmer T."/>
            <person name="Bennett K.L."/>
            <person name="Superti-Furga G."/>
            <person name="Colinge J."/>
        </authorList>
    </citation>
    <scope>IDENTIFICATION BY MASS SPECTROMETRY [LARGE SCALE ANALYSIS]</scope>
</reference>
<reference key="12">
    <citation type="journal article" date="2011" name="Cell">
        <title>Centriolar kinesin Kif24 interacts with CP110 to remodel microtubules and regulate ciliogenesis.</title>
        <authorList>
            <person name="Kobayashi T."/>
            <person name="Tsang W.Y."/>
            <person name="Li J."/>
            <person name="Lane W."/>
            <person name="Dynlacht B.D."/>
        </authorList>
    </citation>
    <scope>INTERACTION WITH KIF24</scope>
</reference>
<reference key="13">
    <citation type="journal article" date="2012" name="Mol. Cell. Proteomics">
        <title>Interaction proteomics identify NEURL4 and the HECT E3 ligase HERC2 as novel modulators of centrosome architecture.</title>
        <authorList>
            <person name="Al-Hakim A.K."/>
            <person name="Bashkurov M."/>
            <person name="Gingras A.C."/>
            <person name="Durocher D."/>
            <person name="Pelletier L."/>
        </authorList>
    </citation>
    <scope>INTERACTION WITH CCP110; HERC2 AND NEURL4</scope>
</reference>
<reference key="14">
    <citation type="journal article" date="2013" name="J. Proteome Res.">
        <title>Toward a comprehensive characterization of a human cancer cell phosphoproteome.</title>
        <authorList>
            <person name="Zhou H."/>
            <person name="Di Palma S."/>
            <person name="Preisinger C."/>
            <person name="Peng M."/>
            <person name="Polat A.N."/>
            <person name="Heck A.J."/>
            <person name="Mohammed S."/>
        </authorList>
    </citation>
    <scope>PHOSPHORYLATION [LARGE SCALE ANALYSIS] AT SER-308 AND SER-500</scope>
    <scope>IDENTIFICATION BY MASS SPECTROMETRY [LARGE SCALE ANALYSIS]</scope>
    <source>
        <tissue>Cervix carcinoma</tissue>
        <tissue>Erythroleukemia</tissue>
    </source>
</reference>
<reference key="15">
    <citation type="journal article" date="2014" name="J. Cell Biol.">
        <title>The CP110-interacting proteins Talpid3 and Cep290 play overlapping and distinct roles in cilia assembly.</title>
        <authorList>
            <person name="Kobayashi T."/>
            <person name="Kim S."/>
            <person name="Lin Y.C."/>
            <person name="Inoue T."/>
            <person name="Dynlacht B.D."/>
        </authorList>
    </citation>
    <scope>INTERACTION WITH TALPID3</scope>
</reference>
<reference key="16">
    <citation type="journal article" date="2018" name="Nat. Commun.">
        <title>M-Phase Phosphoprotein 9 regulates ciliogenesis by modulating CP110-CEP97 complex localization at the mother centriole.</title>
        <authorList>
            <person name="Huang N."/>
            <person name="Zhang D."/>
            <person name="Li F."/>
            <person name="Chai P."/>
            <person name="Wang S."/>
            <person name="Teng J."/>
            <person name="Chen J."/>
        </authorList>
    </citation>
    <scope>FUNCTION</scope>
    <scope>SUBCELLULAR LOCATION</scope>
    <scope>INTERACTION WITH MPHOSPH9</scope>
</reference>
<comment type="function">
    <text evidence="5 10">Acts as a key negative regulator of ciliogenesis in collaboration with CCP110 by capping the mother centriole thereby preventing cilia formation (PubMed:17719545, PubMed:30375385). Required for recruitment of CCP110 to the centrosome (PubMed:17719545).</text>
</comment>
<comment type="subunit">
    <text evidence="1 5 6 7 8 9 10">Interacts with CALM1, CEP76, KIF24 and TALPID3. Interacts with CCP110. ENKD1 competes with CEP97 for binding to CCP110, destabilizing the interaction between CP110 and CEP97 which promotes the removal of CCP110 and CEP97 from the mother centriole and allows the initiation of ciliogenesis (By similarity). Via its interaction with CCP110, may indirectly interact with HERC2 and NEURL4 (PubMed:22261722). Interacts with MPHOSPH9 (PubMed:30375385).</text>
</comment>
<comment type="interaction">
    <interactant intactId="EBI-1566210">
        <id>Q8IW35</id>
    </interactant>
    <interactant intactId="EBI-1773495">
        <id>Q562R1</id>
        <label>ACTBL2</label>
    </interactant>
    <organismsDiffer>false</organismsDiffer>
    <experiments>2</experiments>
</comment>
<comment type="interaction">
    <interactant intactId="EBI-1566210">
        <id>Q8IW35</id>
    </interactant>
    <interactant intactId="EBI-1566217">
        <id>O43303</id>
        <label>CCP110</label>
    </interactant>
    <organismsDiffer>false</organismsDiffer>
    <experiments>30</experiments>
</comment>
<comment type="interaction">
    <interactant intactId="EBI-1566210">
        <id>Q8IW35</id>
    </interactant>
    <interactant intactId="EBI-2556811">
        <id>Q5T7B8</id>
        <label>KIF24</label>
    </interactant>
    <organismsDiffer>false</organismsDiffer>
    <experiments>14</experiments>
</comment>
<comment type="subcellular location">
    <subcellularLocation>
        <location evidence="4 5 10">Cytoplasm</location>
        <location evidence="4 5 10">Cytoskeleton</location>
        <location evidence="4 5 10">Microtubule organizing center</location>
        <location evidence="4 5 10">Centrosome</location>
    </subcellularLocation>
    <subcellularLocation>
        <location evidence="10">Cytoplasm</location>
        <location evidence="10">Cytoskeleton</location>
        <location evidence="10">Microtubule organizing center</location>
        <location evidence="10">Centrosome</location>
        <location evidence="10">Centriole</location>
    </subcellularLocation>
    <text evidence="10">Recruited at the distal end of the mother centriole by MPHOSPH9.</text>
</comment>
<comment type="alternative products">
    <event type="alternative splicing"/>
    <isoform>
        <id>Q8IW35-1</id>
        <name>1</name>
        <sequence type="displayed"/>
    </isoform>
    <isoform>
        <id>Q8IW35-2</id>
        <name>2</name>
        <sequence type="described" ref="VSP_031155"/>
    </isoform>
</comment>
<comment type="miscellaneous">
    <molecule>Isoform 2</molecule>
    <text evidence="12">Sequence incomplete.</text>
</comment>
<comment type="sequence caution" evidence="12">
    <conflict type="erroneous initiation">
        <sequence resource="EMBL-CDS" id="BAB15531"/>
    </conflict>
    <text>Truncated N-terminus.</text>
</comment>
<comment type="sequence caution" evidence="12">
    <conflict type="frameshift">
        <sequence resource="EMBL-CDS" id="BAC04055"/>
    </conflict>
</comment>
<protein>
    <recommendedName>
        <fullName>Centrosomal protein of 97 kDa</fullName>
        <shortName>Cep97</shortName>
    </recommendedName>
    <alternativeName>
        <fullName>Leucine-rich repeat and IQ domain-containing protein 2</fullName>
    </alternativeName>
</protein>
<keyword id="KW-0025">Alternative splicing</keyword>
<keyword id="KW-0112">Calmodulin-binding</keyword>
<keyword id="KW-0970">Cilium biogenesis/degradation</keyword>
<keyword id="KW-0963">Cytoplasm</keyword>
<keyword id="KW-0206">Cytoskeleton</keyword>
<keyword id="KW-0433">Leucine-rich repeat</keyword>
<keyword id="KW-0597">Phosphoprotein</keyword>
<keyword id="KW-1267">Proteomics identification</keyword>
<keyword id="KW-1185">Reference proteome</keyword>
<keyword id="KW-0677">Repeat</keyword>
<sequence>MAVARVDAALPPGEGSVVNWSGQGLQKLGPNLPCEADIHTLILDKNQIIKLENLEKCKRLIQLSVANNRLVRMMGVAKLTLLRVLNLPHNSIGCVEGLKELVHLEWLNLAGNNLKAMEQINSCTALQHLDLSDNNISQIGDLSKLVSLKTLLLHGNIITSLRMAPAYLPRSLAILSLAENEIRDLNEISFLASLTELEQLSIMNNPCVMATPSIPGFDYRPYIVSWCLNLRVLDGYVISQKESLKAEWLYSQGKGRAYRPGQHIQLVQYLATVCPLTSTLGLQTAEDAKLEKILSKQRFHQRQLMNQSQNEELSPLVPVETRASLIPEHSSPVQDCQISQESEPVIQVNSWVGINSNDDQLFAVKNNFPASVHTTRYSRNDLHLEDIQTDEDKLNCSLLSSESTFMPVASGLSPLSPTVELRLQGINLGLEDDGVADESVKGLESQVLDKEEEQPLWAANENSVQMMRSEINTEVNEKAGLLPCPEPTIISAILKDDNHSLTFFPESTEQKQSDIKKPENTQPENKETISQATSEKLPMILTQRSVALGQDKVALQKLNDAATKLQACWRGFYARNYNPQAKDVRYEIRLRRMQEHIVCLTDEIRRLRKERDEERIKKFVQEEAFRFLWNQVRSLQVWQQTVDQRLSSWHTDVPPISSTLVPSKHPLFTQSQESSCDQNADWFIASDVAPQEKSLPEFPDSGFHSSLTEQVHSLQHSLDFEKSSTEGSESSIMGNSIDTVRYGKESDLGDVSEEHGEWNKESSNNEQDNSLLEQYLTSVQQLEDADERTNFDTETRDSKLHIACFPVQLDTLSDGASVDESHGISPPLQGEISQTQENSKLNAEVQGQQPECDSTFQLLHVGVTV</sequence>
<organism>
    <name type="scientific">Homo sapiens</name>
    <name type="common">Human</name>
    <dbReference type="NCBI Taxonomy" id="9606"/>
    <lineage>
        <taxon>Eukaryota</taxon>
        <taxon>Metazoa</taxon>
        <taxon>Chordata</taxon>
        <taxon>Craniata</taxon>
        <taxon>Vertebrata</taxon>
        <taxon>Euteleostomi</taxon>
        <taxon>Mammalia</taxon>
        <taxon>Eutheria</taxon>
        <taxon>Euarchontoglires</taxon>
        <taxon>Primates</taxon>
        <taxon>Haplorrhini</taxon>
        <taxon>Catarrhini</taxon>
        <taxon>Hominidae</taxon>
        <taxon>Homo</taxon>
    </lineage>
</organism>
<dbReference type="EMBL" id="AC084198">
    <property type="status" value="NOT_ANNOTATED_CDS"/>
    <property type="molecule type" value="Genomic_DNA"/>
</dbReference>
<dbReference type="EMBL" id="BC041085">
    <property type="protein sequence ID" value="AAH41085.1"/>
    <property type="molecule type" value="mRNA"/>
</dbReference>
<dbReference type="EMBL" id="AK026700">
    <property type="protein sequence ID" value="BAB15531.1"/>
    <property type="status" value="ALT_INIT"/>
    <property type="molecule type" value="mRNA"/>
</dbReference>
<dbReference type="EMBL" id="AK093100">
    <property type="protein sequence ID" value="BAC04055.1"/>
    <property type="status" value="ALT_FRAME"/>
    <property type="molecule type" value="mRNA"/>
</dbReference>
<dbReference type="CCDS" id="CCDS2944.1">
    <molecule id="Q8IW35-1"/>
</dbReference>
<dbReference type="RefSeq" id="NP_001290330.1">
    <property type="nucleotide sequence ID" value="NM_001303401.1"/>
</dbReference>
<dbReference type="RefSeq" id="NP_078824.2">
    <molecule id="Q8IW35-1"/>
    <property type="nucleotide sequence ID" value="NM_024548.3"/>
</dbReference>
<dbReference type="SMR" id="Q8IW35"/>
<dbReference type="BioGRID" id="122737">
    <property type="interactions" value="186"/>
</dbReference>
<dbReference type="CORUM" id="Q8IW35"/>
<dbReference type="FunCoup" id="Q8IW35">
    <property type="interactions" value="1391"/>
</dbReference>
<dbReference type="IntAct" id="Q8IW35">
    <property type="interactions" value="101"/>
</dbReference>
<dbReference type="MINT" id="Q8IW35"/>
<dbReference type="STRING" id="9606.ENSP00000342510"/>
<dbReference type="GlyGen" id="Q8IW35">
    <property type="glycosylation" value="1 site, 1 O-linked glycan (1 site)"/>
</dbReference>
<dbReference type="iPTMnet" id="Q8IW35"/>
<dbReference type="MetOSite" id="Q8IW35"/>
<dbReference type="PhosphoSitePlus" id="Q8IW35"/>
<dbReference type="BioMuta" id="CEP97"/>
<dbReference type="DMDM" id="74762481"/>
<dbReference type="jPOST" id="Q8IW35"/>
<dbReference type="MassIVE" id="Q8IW35"/>
<dbReference type="PaxDb" id="9606-ENSP00000342510"/>
<dbReference type="PeptideAtlas" id="Q8IW35"/>
<dbReference type="ProteomicsDB" id="70798">
    <molecule id="Q8IW35-1"/>
</dbReference>
<dbReference type="ProteomicsDB" id="70799">
    <molecule id="Q8IW35-2"/>
</dbReference>
<dbReference type="Pumba" id="Q8IW35"/>
<dbReference type="Antibodypedia" id="15955">
    <property type="antibodies" value="162 antibodies from 25 providers"/>
</dbReference>
<dbReference type="DNASU" id="79598"/>
<dbReference type="Ensembl" id="ENST00000341893.8">
    <molecule id="Q8IW35-1"/>
    <property type="protein sequence ID" value="ENSP00000342510.3"/>
    <property type="gene ID" value="ENSG00000182504.12"/>
</dbReference>
<dbReference type="Ensembl" id="ENST00000704365.1">
    <molecule id="Q8IW35-2"/>
    <property type="protein sequence ID" value="ENSP00000515873.1"/>
    <property type="gene ID" value="ENSG00000182504.12"/>
</dbReference>
<dbReference type="GeneID" id="79598"/>
<dbReference type="KEGG" id="hsa:79598"/>
<dbReference type="MANE-Select" id="ENST00000341893.8">
    <property type="protein sequence ID" value="ENSP00000342510.3"/>
    <property type="RefSeq nucleotide sequence ID" value="NM_024548.4"/>
    <property type="RefSeq protein sequence ID" value="NP_078824.2"/>
</dbReference>
<dbReference type="UCSC" id="uc003dvk.2">
    <molecule id="Q8IW35-1"/>
    <property type="organism name" value="human"/>
</dbReference>
<dbReference type="AGR" id="HGNC:26244"/>
<dbReference type="CTD" id="79598"/>
<dbReference type="DisGeNET" id="79598"/>
<dbReference type="GeneCards" id="CEP97"/>
<dbReference type="HGNC" id="HGNC:26244">
    <property type="gene designation" value="CEP97"/>
</dbReference>
<dbReference type="HPA" id="ENSG00000182504">
    <property type="expression patterns" value="Low tissue specificity"/>
</dbReference>
<dbReference type="MalaCards" id="CEP97"/>
<dbReference type="MIM" id="615864">
    <property type="type" value="gene"/>
</dbReference>
<dbReference type="neXtProt" id="NX_Q8IW35"/>
<dbReference type="OpenTargets" id="ENSG00000182504"/>
<dbReference type="PharmGKB" id="PA162382176"/>
<dbReference type="VEuPathDB" id="HostDB:ENSG00000182504"/>
<dbReference type="eggNOG" id="KOG0531">
    <property type="taxonomic scope" value="Eukaryota"/>
</dbReference>
<dbReference type="GeneTree" id="ENSGT00910000144283"/>
<dbReference type="InParanoid" id="Q8IW35"/>
<dbReference type="OMA" id="AYWRGFY"/>
<dbReference type="OrthoDB" id="5954088at2759"/>
<dbReference type="PAN-GO" id="Q8IW35">
    <property type="GO annotations" value="2 GO annotations based on evolutionary models"/>
</dbReference>
<dbReference type="PhylomeDB" id="Q8IW35"/>
<dbReference type="TreeFam" id="TF320816"/>
<dbReference type="PathwayCommons" id="Q8IW35"/>
<dbReference type="Reactome" id="R-HSA-5620912">
    <property type="pathway name" value="Anchoring of the basal body to the plasma membrane"/>
</dbReference>
<dbReference type="Reactome" id="R-HSA-9013424">
    <property type="pathway name" value="RHOV GTPase cycle"/>
</dbReference>
<dbReference type="SignaLink" id="Q8IW35"/>
<dbReference type="SIGNOR" id="Q8IW35"/>
<dbReference type="BioGRID-ORCS" id="79598">
    <property type="hits" value="160 hits in 1175 CRISPR screens"/>
</dbReference>
<dbReference type="ChiTaRS" id="CEP97">
    <property type="organism name" value="human"/>
</dbReference>
<dbReference type="GeneWiki" id="CEP97"/>
<dbReference type="GenomeRNAi" id="79598"/>
<dbReference type="Pharos" id="Q8IW35">
    <property type="development level" value="Tbio"/>
</dbReference>
<dbReference type="PRO" id="PR:Q8IW35"/>
<dbReference type="Proteomes" id="UP000005640">
    <property type="component" value="Chromosome 3"/>
</dbReference>
<dbReference type="RNAct" id="Q8IW35">
    <property type="molecule type" value="protein"/>
</dbReference>
<dbReference type="Bgee" id="ENSG00000182504">
    <property type="expression patterns" value="Expressed in corpus callosum and 180 other cell types or tissues"/>
</dbReference>
<dbReference type="ExpressionAtlas" id="Q8IW35">
    <property type="expression patterns" value="baseline and differential"/>
</dbReference>
<dbReference type="GO" id="GO:0005814">
    <property type="term" value="C:centriole"/>
    <property type="evidence" value="ECO:0000314"/>
    <property type="project" value="UniProtKB"/>
</dbReference>
<dbReference type="GO" id="GO:0005813">
    <property type="term" value="C:centrosome"/>
    <property type="evidence" value="ECO:0000314"/>
    <property type="project" value="UniProtKB"/>
</dbReference>
<dbReference type="GO" id="GO:0005829">
    <property type="term" value="C:cytosol"/>
    <property type="evidence" value="ECO:0000304"/>
    <property type="project" value="Reactome"/>
</dbReference>
<dbReference type="GO" id="GO:0032991">
    <property type="term" value="C:protein-containing complex"/>
    <property type="evidence" value="ECO:0000314"/>
    <property type="project" value="MGI"/>
</dbReference>
<dbReference type="GO" id="GO:0005516">
    <property type="term" value="F:calmodulin binding"/>
    <property type="evidence" value="ECO:0007669"/>
    <property type="project" value="UniProtKB-KW"/>
</dbReference>
<dbReference type="GO" id="GO:0030030">
    <property type="term" value="P:cell projection organization"/>
    <property type="evidence" value="ECO:0007669"/>
    <property type="project" value="UniProtKB-KW"/>
</dbReference>
<dbReference type="GO" id="GO:1902018">
    <property type="term" value="P:negative regulation of cilium assembly"/>
    <property type="evidence" value="ECO:0000315"/>
    <property type="project" value="UniProtKB"/>
</dbReference>
<dbReference type="GO" id="GO:1901673">
    <property type="term" value="P:regulation of mitotic spindle assembly"/>
    <property type="evidence" value="ECO:0000315"/>
    <property type="project" value="UniProtKB"/>
</dbReference>
<dbReference type="CDD" id="cd23767">
    <property type="entry name" value="IQCD"/>
    <property type="match status" value="1"/>
</dbReference>
<dbReference type="FunFam" id="3.80.10.10:FF:000392">
    <property type="entry name" value="centrosomal protein of 97 kDa isoform X1"/>
    <property type="match status" value="1"/>
</dbReference>
<dbReference type="FunFam" id="3.80.10.10:FF:000462">
    <property type="entry name" value="centrosomal protein of 97 kDa isoform X2"/>
    <property type="match status" value="1"/>
</dbReference>
<dbReference type="Gene3D" id="3.80.10.10">
    <property type="entry name" value="Ribonuclease Inhibitor"/>
    <property type="match status" value="2"/>
</dbReference>
<dbReference type="InterPro" id="IPR050576">
    <property type="entry name" value="Cilia_flagella_integrity"/>
</dbReference>
<dbReference type="InterPro" id="IPR001611">
    <property type="entry name" value="Leu-rich_rpt"/>
</dbReference>
<dbReference type="InterPro" id="IPR032675">
    <property type="entry name" value="LRR_dom_sf"/>
</dbReference>
<dbReference type="PANTHER" id="PTHR45973:SF2">
    <property type="entry name" value="CENTROSOMAL PROTEIN OF 97 KDA"/>
    <property type="match status" value="1"/>
</dbReference>
<dbReference type="PANTHER" id="PTHR45973">
    <property type="entry name" value="PROTEIN PHOSPHATASE 1 REGULATORY SUBUNIT SDS22-RELATED"/>
    <property type="match status" value="1"/>
</dbReference>
<dbReference type="Pfam" id="PF14580">
    <property type="entry name" value="LRR_9"/>
    <property type="match status" value="1"/>
</dbReference>
<dbReference type="SMART" id="SM00365">
    <property type="entry name" value="LRR_SD22"/>
    <property type="match status" value="3"/>
</dbReference>
<dbReference type="SUPFAM" id="SSF52058">
    <property type="entry name" value="L domain-like"/>
    <property type="match status" value="1"/>
</dbReference>
<dbReference type="PROSITE" id="PS50096">
    <property type="entry name" value="IQ"/>
    <property type="match status" value="1"/>
</dbReference>
<dbReference type="PROSITE" id="PS51450">
    <property type="entry name" value="LRR"/>
    <property type="match status" value="7"/>
</dbReference>
<gene>
    <name type="primary">CEP97</name>
    <name type="synonym">LRRIQ2</name>
</gene>